<sequence length="375" mass="43175">MKPLLGTFYLLGMLVPGWLGYDRSLTQQRQEVVDKVVSPWSILETYSYNRYHPMGEIYQWMSEIREKYTEVVTQHFLGMTYESRPMYYLKISQPSSNPKKIIWMDCGIHAREWIAPAFCQWFVKEILQNYEDNSRIRRLLKNLDFYVLPVLNIDGYIYTWTTDRLWRKSRSSHNNGTCFGTDLNRNFDASWCSIGASHNCESLTFCGTGPMSEPETKAVSSFIESKKENIACFLTMHSYGQLILVPYGYTKNKSNNHEELIQVGQKAANALKAKHGTNYRVGSSADILYATSGSSRDWARDIGIPFSYTFELRDNGTYGFVLPETQIQATCEETMEAVLSVLDDVYEKYWYTNSARKAKSTALVLGLLMSFMSLL</sequence>
<dbReference type="EC" id="3.4.17.-" evidence="2"/>
<dbReference type="EMBL" id="BC122774">
    <property type="protein sequence ID" value="AAI22775.1"/>
    <property type="molecule type" value="mRNA"/>
</dbReference>
<dbReference type="RefSeq" id="NP_001068840.1">
    <property type="nucleotide sequence ID" value="NM_001075372.2"/>
</dbReference>
<dbReference type="SMR" id="Q0II73"/>
<dbReference type="FunCoup" id="Q0II73">
    <property type="interactions" value="30"/>
</dbReference>
<dbReference type="STRING" id="9913.ENSBTAP00000025539"/>
<dbReference type="MEROPS" id="M14.021"/>
<dbReference type="GlyCosmos" id="Q0II73">
    <property type="glycosylation" value="3 sites, No reported glycans"/>
</dbReference>
<dbReference type="GlyGen" id="Q0II73">
    <property type="glycosylation" value="3 sites"/>
</dbReference>
<dbReference type="PaxDb" id="9913-ENSBTAP00000025539"/>
<dbReference type="Ensembl" id="ENSBTAT00000025539.4">
    <property type="protein sequence ID" value="ENSBTAP00000025539.3"/>
    <property type="gene ID" value="ENSBTAG00000019190.5"/>
</dbReference>
<dbReference type="GeneID" id="508767"/>
<dbReference type="KEGG" id="bta:508767"/>
<dbReference type="CTD" id="130749"/>
<dbReference type="VEuPathDB" id="HostDB:ENSBTAG00000019190"/>
<dbReference type="VGNC" id="VGNC:27666">
    <property type="gene designation" value="CPO"/>
</dbReference>
<dbReference type="eggNOG" id="KOG2650">
    <property type="taxonomic scope" value="Eukaryota"/>
</dbReference>
<dbReference type="GeneTree" id="ENSGT00940000161508"/>
<dbReference type="HOGENOM" id="CLU_019326_4_1_1"/>
<dbReference type="InParanoid" id="Q0II73"/>
<dbReference type="OMA" id="EEQWAGQ"/>
<dbReference type="OrthoDB" id="3626597at2759"/>
<dbReference type="TreeFam" id="TF317197"/>
<dbReference type="Proteomes" id="UP000009136">
    <property type="component" value="Chromosome 2"/>
</dbReference>
<dbReference type="Bgee" id="ENSBTAG00000019190">
    <property type="expression patterns" value="Expressed in ileum and 3 other cell types or tissues"/>
</dbReference>
<dbReference type="GO" id="GO:0016324">
    <property type="term" value="C:apical plasma membrane"/>
    <property type="evidence" value="ECO:0007669"/>
    <property type="project" value="UniProtKB-SubCell"/>
</dbReference>
<dbReference type="GO" id="GO:0005615">
    <property type="term" value="C:extracellular space"/>
    <property type="evidence" value="ECO:0000318"/>
    <property type="project" value="GO_Central"/>
</dbReference>
<dbReference type="GO" id="GO:0098552">
    <property type="term" value="C:side of membrane"/>
    <property type="evidence" value="ECO:0007669"/>
    <property type="project" value="UniProtKB-KW"/>
</dbReference>
<dbReference type="GO" id="GO:0004181">
    <property type="term" value="F:metallocarboxypeptidase activity"/>
    <property type="evidence" value="ECO:0000318"/>
    <property type="project" value="GO_Central"/>
</dbReference>
<dbReference type="GO" id="GO:0008270">
    <property type="term" value="F:zinc ion binding"/>
    <property type="evidence" value="ECO:0007669"/>
    <property type="project" value="InterPro"/>
</dbReference>
<dbReference type="GO" id="GO:0006508">
    <property type="term" value="P:proteolysis"/>
    <property type="evidence" value="ECO:0000318"/>
    <property type="project" value="GO_Central"/>
</dbReference>
<dbReference type="CDD" id="cd06247">
    <property type="entry name" value="M14_CPO"/>
    <property type="match status" value="1"/>
</dbReference>
<dbReference type="FunFam" id="3.40.630.10:FF:000050">
    <property type="entry name" value="Carboxypeptidase O"/>
    <property type="match status" value="1"/>
</dbReference>
<dbReference type="Gene3D" id="3.40.630.10">
    <property type="entry name" value="Zn peptidases"/>
    <property type="match status" value="1"/>
</dbReference>
<dbReference type="InterPro" id="IPR033850">
    <property type="entry name" value="Carboxypeptidase_O"/>
</dbReference>
<dbReference type="InterPro" id="IPR000834">
    <property type="entry name" value="Peptidase_M14"/>
</dbReference>
<dbReference type="PANTHER" id="PTHR11705:SF19">
    <property type="entry name" value="CARBOXYPEPTIDASE O"/>
    <property type="match status" value="1"/>
</dbReference>
<dbReference type="PANTHER" id="PTHR11705">
    <property type="entry name" value="PROTEASE FAMILY M14 CARBOXYPEPTIDASE A,B"/>
    <property type="match status" value="1"/>
</dbReference>
<dbReference type="Pfam" id="PF00246">
    <property type="entry name" value="Peptidase_M14"/>
    <property type="match status" value="1"/>
</dbReference>
<dbReference type="PRINTS" id="PR00765">
    <property type="entry name" value="CRBOXYPTASEA"/>
</dbReference>
<dbReference type="SMART" id="SM00631">
    <property type="entry name" value="Zn_pept"/>
    <property type="match status" value="1"/>
</dbReference>
<dbReference type="SUPFAM" id="SSF53187">
    <property type="entry name" value="Zn-dependent exopeptidases"/>
    <property type="match status" value="1"/>
</dbReference>
<dbReference type="PROSITE" id="PS00132">
    <property type="entry name" value="CARBOXYPEPT_ZN_1"/>
    <property type="match status" value="1"/>
</dbReference>
<dbReference type="PROSITE" id="PS52035">
    <property type="entry name" value="PEPTIDASE_M14"/>
    <property type="match status" value="1"/>
</dbReference>
<feature type="signal peptide" evidence="2">
    <location>
        <begin position="1"/>
        <end position="20"/>
    </location>
</feature>
<feature type="chain" id="PRO_0000282873" description="Carboxypeptidase O" evidence="5">
    <location>
        <begin position="21"/>
        <end position="354"/>
    </location>
</feature>
<feature type="propeptide" id="PRO_0000437880" description="Removed in mature form" evidence="5">
    <location>
        <begin position="355"/>
        <end position="375"/>
    </location>
</feature>
<feature type="domain" description="Peptidase M14" evidence="4">
    <location>
        <begin position="50"/>
        <end position="345"/>
    </location>
</feature>
<feature type="active site" description="Proton donor/acceptor" evidence="4">
    <location>
        <position position="311"/>
    </location>
</feature>
<feature type="binding site" evidence="4">
    <location>
        <position position="109"/>
    </location>
    <ligand>
        <name>Zn(2+)</name>
        <dbReference type="ChEBI" id="CHEBI:29105"/>
        <note>catalytic</note>
    </ligand>
</feature>
<feature type="binding site" evidence="4">
    <location>
        <position position="112"/>
    </location>
    <ligand>
        <name>Zn(2+)</name>
        <dbReference type="ChEBI" id="CHEBI:29105"/>
        <note>catalytic</note>
    </ligand>
</feature>
<feature type="binding site" evidence="4">
    <location>
        <position position="237"/>
    </location>
    <ligand>
        <name>Zn(2+)</name>
        <dbReference type="ChEBI" id="CHEBI:29105"/>
        <note>catalytic</note>
    </ligand>
</feature>
<feature type="lipid moiety-binding region" description="GPI-anchor amidated serine" evidence="3">
    <location>
        <position position="354"/>
    </location>
</feature>
<feature type="glycosylation site" description="N-linked (GlcNAc...) asparagine" evidence="3">
    <location>
        <position position="175"/>
    </location>
</feature>
<feature type="glycosylation site" description="N-linked (GlcNAc...) asparagine" evidence="3">
    <location>
        <position position="252"/>
    </location>
</feature>
<feature type="glycosylation site" description="N-linked (GlcNAc...) asparagine" evidence="3">
    <location>
        <position position="315"/>
    </location>
</feature>
<protein>
    <recommendedName>
        <fullName evidence="2">Carboxypeptidase O</fullName>
        <shortName evidence="2">CPO</shortName>
        <ecNumber evidence="2">3.4.17.-</ecNumber>
    </recommendedName>
</protein>
<proteinExistence type="evidence at transcript level"/>
<comment type="function">
    <text evidence="2">Carboxypeptidase which preferentially cleaves C-terminal acidic residues from peptides and proteins. Can also cleave C-terminal hydrophobic amino acids, with a preference for small residues over large residues.</text>
</comment>
<comment type="cofactor">
    <cofactor evidence="1">
        <name>Zn(2+)</name>
        <dbReference type="ChEBI" id="CHEBI:29105"/>
    </cofactor>
</comment>
<comment type="subcellular location">
    <subcellularLocation>
        <location evidence="2">Apical cell membrane</location>
        <topology evidence="2">Lipid-anchor</topology>
        <topology evidence="2">GPI-anchor</topology>
    </subcellularLocation>
</comment>
<comment type="similarity">
    <text evidence="5">Belongs to the peptidase M14 family.</text>
</comment>
<accession>Q0II73</accession>
<organism>
    <name type="scientific">Bos taurus</name>
    <name type="common">Bovine</name>
    <dbReference type="NCBI Taxonomy" id="9913"/>
    <lineage>
        <taxon>Eukaryota</taxon>
        <taxon>Metazoa</taxon>
        <taxon>Chordata</taxon>
        <taxon>Craniata</taxon>
        <taxon>Vertebrata</taxon>
        <taxon>Euteleostomi</taxon>
        <taxon>Mammalia</taxon>
        <taxon>Eutheria</taxon>
        <taxon>Laurasiatheria</taxon>
        <taxon>Artiodactyla</taxon>
        <taxon>Ruminantia</taxon>
        <taxon>Pecora</taxon>
        <taxon>Bovidae</taxon>
        <taxon>Bovinae</taxon>
        <taxon>Bos</taxon>
    </lineage>
</organism>
<evidence type="ECO:0000250" key="1">
    <source>
        <dbReference type="UniProtKB" id="P00730"/>
    </source>
</evidence>
<evidence type="ECO:0000250" key="2">
    <source>
        <dbReference type="UniProtKB" id="Q8IVL8"/>
    </source>
</evidence>
<evidence type="ECO:0000255" key="3"/>
<evidence type="ECO:0000255" key="4">
    <source>
        <dbReference type="PROSITE-ProRule" id="PRU01379"/>
    </source>
</evidence>
<evidence type="ECO:0000305" key="5"/>
<name>CBPO_BOVIN</name>
<gene>
    <name evidence="2" type="primary">CPO</name>
</gene>
<reference key="1">
    <citation type="submission" date="2006-08" db="EMBL/GenBank/DDBJ databases">
        <authorList>
            <consortium name="NIH - Mammalian Gene Collection (MGC) project"/>
        </authorList>
    </citation>
    <scope>NUCLEOTIDE SEQUENCE [LARGE SCALE MRNA]</scope>
    <source>
        <strain>Crossbred X Angus</strain>
        <tissue>Ileum</tissue>
    </source>
</reference>
<keyword id="KW-0121">Carboxypeptidase</keyword>
<keyword id="KW-1003">Cell membrane</keyword>
<keyword id="KW-0325">Glycoprotein</keyword>
<keyword id="KW-0336">GPI-anchor</keyword>
<keyword id="KW-0378">Hydrolase</keyword>
<keyword id="KW-0449">Lipoprotein</keyword>
<keyword id="KW-0472">Membrane</keyword>
<keyword id="KW-0479">Metal-binding</keyword>
<keyword id="KW-0482">Metalloprotease</keyword>
<keyword id="KW-0645">Protease</keyword>
<keyword id="KW-1185">Reference proteome</keyword>
<keyword id="KW-0732">Signal</keyword>
<keyword id="KW-0862">Zinc</keyword>